<organism>
    <name type="scientific">Corynebacterium kroppenstedtii (strain DSM 44385 / JCM 11950 / CIP 105744 / CCUG 35717)</name>
    <dbReference type="NCBI Taxonomy" id="645127"/>
    <lineage>
        <taxon>Bacteria</taxon>
        <taxon>Bacillati</taxon>
        <taxon>Actinomycetota</taxon>
        <taxon>Actinomycetes</taxon>
        <taxon>Mycobacteriales</taxon>
        <taxon>Corynebacteriaceae</taxon>
        <taxon>Corynebacterium</taxon>
    </lineage>
</organism>
<reference key="1">
    <citation type="journal article" date="2008" name="J. Biotechnol.">
        <title>Ultrafast pyrosequencing of Corynebacterium kroppenstedtii DSM44385 revealed insights into the physiology of a lipophilic corynebacterium that lacks mycolic acids.</title>
        <authorList>
            <person name="Tauch A."/>
            <person name="Schneider J."/>
            <person name="Szczepanowski R."/>
            <person name="Tilker A."/>
            <person name="Viehoever P."/>
            <person name="Gartemann K.-H."/>
            <person name="Arnold W."/>
            <person name="Blom J."/>
            <person name="Brinkrolf K."/>
            <person name="Brune I."/>
            <person name="Goetker S."/>
            <person name="Weisshaar B."/>
            <person name="Goesmann A."/>
            <person name="Droege M."/>
            <person name="Puehler A."/>
        </authorList>
    </citation>
    <scope>NUCLEOTIDE SEQUENCE [LARGE SCALE GENOMIC DNA]</scope>
    <source>
        <strain>DSM 44385 / JCM 11950 / CIP 105744 / CCUG 35717</strain>
    </source>
</reference>
<gene>
    <name evidence="1" type="primary">rpmC</name>
    <name type="ordered locus">ckrop_1829</name>
</gene>
<keyword id="KW-1185">Reference proteome</keyword>
<keyword id="KW-0687">Ribonucleoprotein</keyword>
<keyword id="KW-0689">Ribosomal protein</keyword>
<comment type="similarity">
    <text evidence="1">Belongs to the universal ribosomal protein uL29 family.</text>
</comment>
<feature type="chain" id="PRO_1000205617" description="Large ribosomal subunit protein uL29">
    <location>
        <begin position="1"/>
        <end position="76"/>
    </location>
</feature>
<name>RL29_CORK4</name>
<sequence>MATGTPAHELRELSAEELTTRLHEAKEELFNLRFQNATGQLTNNRRLGTVKRDIARIHTVIRERELGLSSAPGDEA</sequence>
<accession>C4LL44</accession>
<dbReference type="EMBL" id="CP001620">
    <property type="protein sequence ID" value="ACR18549.1"/>
    <property type="molecule type" value="Genomic_DNA"/>
</dbReference>
<dbReference type="RefSeq" id="WP_012732436.1">
    <property type="nucleotide sequence ID" value="NC_012704.1"/>
</dbReference>
<dbReference type="SMR" id="C4LL44"/>
<dbReference type="STRING" id="645127.ckrop_1829"/>
<dbReference type="GeneID" id="92726626"/>
<dbReference type="KEGG" id="ckp:ckrop_1829"/>
<dbReference type="eggNOG" id="COG0255">
    <property type="taxonomic scope" value="Bacteria"/>
</dbReference>
<dbReference type="HOGENOM" id="CLU_158491_3_3_11"/>
<dbReference type="OrthoDB" id="9815192at2"/>
<dbReference type="Proteomes" id="UP000001473">
    <property type="component" value="Chromosome"/>
</dbReference>
<dbReference type="GO" id="GO:0022625">
    <property type="term" value="C:cytosolic large ribosomal subunit"/>
    <property type="evidence" value="ECO:0007669"/>
    <property type="project" value="TreeGrafter"/>
</dbReference>
<dbReference type="GO" id="GO:0003735">
    <property type="term" value="F:structural constituent of ribosome"/>
    <property type="evidence" value="ECO:0007669"/>
    <property type="project" value="InterPro"/>
</dbReference>
<dbReference type="GO" id="GO:0006412">
    <property type="term" value="P:translation"/>
    <property type="evidence" value="ECO:0007669"/>
    <property type="project" value="UniProtKB-UniRule"/>
</dbReference>
<dbReference type="CDD" id="cd00427">
    <property type="entry name" value="Ribosomal_L29_HIP"/>
    <property type="match status" value="1"/>
</dbReference>
<dbReference type="FunFam" id="1.10.287.310:FF:000001">
    <property type="entry name" value="50S ribosomal protein L29"/>
    <property type="match status" value="1"/>
</dbReference>
<dbReference type="Gene3D" id="1.10.287.310">
    <property type="match status" value="1"/>
</dbReference>
<dbReference type="HAMAP" id="MF_00374">
    <property type="entry name" value="Ribosomal_uL29"/>
    <property type="match status" value="1"/>
</dbReference>
<dbReference type="InterPro" id="IPR050063">
    <property type="entry name" value="Ribosomal_protein_uL29"/>
</dbReference>
<dbReference type="InterPro" id="IPR001854">
    <property type="entry name" value="Ribosomal_uL29"/>
</dbReference>
<dbReference type="InterPro" id="IPR018254">
    <property type="entry name" value="Ribosomal_uL29_CS"/>
</dbReference>
<dbReference type="InterPro" id="IPR036049">
    <property type="entry name" value="Ribosomal_uL29_sf"/>
</dbReference>
<dbReference type="NCBIfam" id="TIGR00012">
    <property type="entry name" value="L29"/>
    <property type="match status" value="1"/>
</dbReference>
<dbReference type="PANTHER" id="PTHR10916">
    <property type="entry name" value="60S RIBOSOMAL PROTEIN L35/50S RIBOSOMAL PROTEIN L29"/>
    <property type="match status" value="1"/>
</dbReference>
<dbReference type="PANTHER" id="PTHR10916:SF0">
    <property type="entry name" value="LARGE RIBOSOMAL SUBUNIT PROTEIN UL29C"/>
    <property type="match status" value="1"/>
</dbReference>
<dbReference type="Pfam" id="PF00831">
    <property type="entry name" value="Ribosomal_L29"/>
    <property type="match status" value="1"/>
</dbReference>
<dbReference type="SUPFAM" id="SSF46561">
    <property type="entry name" value="Ribosomal protein L29 (L29p)"/>
    <property type="match status" value="1"/>
</dbReference>
<dbReference type="PROSITE" id="PS00579">
    <property type="entry name" value="RIBOSOMAL_L29"/>
    <property type="match status" value="1"/>
</dbReference>
<evidence type="ECO:0000255" key="1">
    <source>
        <dbReference type="HAMAP-Rule" id="MF_00374"/>
    </source>
</evidence>
<evidence type="ECO:0000305" key="2"/>
<protein>
    <recommendedName>
        <fullName evidence="1">Large ribosomal subunit protein uL29</fullName>
    </recommendedName>
    <alternativeName>
        <fullName evidence="2">50S ribosomal protein L29</fullName>
    </alternativeName>
</protein>
<proteinExistence type="inferred from homology"/>